<proteinExistence type="inferred from homology"/>
<evidence type="ECO:0000255" key="1">
    <source>
        <dbReference type="HAMAP-Rule" id="MF_01080"/>
    </source>
</evidence>
<sequence length="305" mass="33538">MAQVKRVRRDVSGIILLDKPRGFTSNAALQKVRWLLNAEKAGHTGSLDPLATGVLPLCFGEATKFSQYLLDADKAYETVMQLGVTTTTADAEGEVLERKPVAVTREQLEALLPQFRGDILQVPPMYSALKRDGQPLYKLARAGEVVEREPRSVNIARLELLALEGDKARLAVACSKGTYIRTLVEDLGQQLGCGAHVAELRRTQAGPFDLSQTVTLETLERLHGEGGAEALDALLQPVDSGLEHWPLLQLSEHSAYYWLHGQPVRAPEAPKYGMVRVQDNNGRFIGIGEVSEDGRIAPRRLIRSE</sequence>
<accession>A4VPN8</accession>
<organism>
    <name type="scientific">Stutzerimonas stutzeri (strain A1501)</name>
    <name type="common">Pseudomonas stutzeri</name>
    <dbReference type="NCBI Taxonomy" id="379731"/>
    <lineage>
        <taxon>Bacteria</taxon>
        <taxon>Pseudomonadati</taxon>
        <taxon>Pseudomonadota</taxon>
        <taxon>Gammaproteobacteria</taxon>
        <taxon>Pseudomonadales</taxon>
        <taxon>Pseudomonadaceae</taxon>
        <taxon>Stutzerimonas</taxon>
    </lineage>
</organism>
<gene>
    <name evidence="1" type="primary">truB</name>
    <name type="ordered locus">PST_3308</name>
</gene>
<protein>
    <recommendedName>
        <fullName evidence="1">tRNA pseudouridine synthase B</fullName>
        <ecNumber evidence="1">5.4.99.25</ecNumber>
    </recommendedName>
    <alternativeName>
        <fullName evidence="1">tRNA pseudouridine(55) synthase</fullName>
        <shortName evidence="1">Psi55 synthase</shortName>
    </alternativeName>
    <alternativeName>
        <fullName evidence="1">tRNA pseudouridylate synthase</fullName>
    </alternativeName>
    <alternativeName>
        <fullName evidence="1">tRNA-uridine isomerase</fullName>
    </alternativeName>
</protein>
<comment type="function">
    <text evidence="1">Responsible for synthesis of pseudouridine from uracil-55 in the psi GC loop of transfer RNAs.</text>
</comment>
<comment type="catalytic activity">
    <reaction evidence="1">
        <text>uridine(55) in tRNA = pseudouridine(55) in tRNA</text>
        <dbReference type="Rhea" id="RHEA:42532"/>
        <dbReference type="Rhea" id="RHEA-COMP:10101"/>
        <dbReference type="Rhea" id="RHEA-COMP:10102"/>
        <dbReference type="ChEBI" id="CHEBI:65314"/>
        <dbReference type="ChEBI" id="CHEBI:65315"/>
        <dbReference type="EC" id="5.4.99.25"/>
    </reaction>
</comment>
<comment type="similarity">
    <text evidence="1">Belongs to the pseudouridine synthase TruB family. Type 1 subfamily.</text>
</comment>
<reference key="1">
    <citation type="journal article" date="2008" name="Proc. Natl. Acad. Sci. U.S.A.">
        <title>Nitrogen fixation island and rhizosphere competence traits in the genome of root-associated Pseudomonas stutzeri A1501.</title>
        <authorList>
            <person name="Yan Y."/>
            <person name="Yang J."/>
            <person name="Dou Y."/>
            <person name="Chen M."/>
            <person name="Ping S."/>
            <person name="Peng J."/>
            <person name="Lu W."/>
            <person name="Zhang W."/>
            <person name="Yao Z."/>
            <person name="Li H."/>
            <person name="Liu W."/>
            <person name="He S."/>
            <person name="Geng L."/>
            <person name="Zhang X."/>
            <person name="Yang F."/>
            <person name="Yu H."/>
            <person name="Zhan Y."/>
            <person name="Li D."/>
            <person name="Lin Z."/>
            <person name="Wang Y."/>
            <person name="Elmerich C."/>
            <person name="Lin M."/>
            <person name="Jin Q."/>
        </authorList>
    </citation>
    <scope>NUCLEOTIDE SEQUENCE [LARGE SCALE GENOMIC DNA]</scope>
    <source>
        <strain>A1501</strain>
    </source>
</reference>
<dbReference type="EC" id="5.4.99.25" evidence="1"/>
<dbReference type="EMBL" id="CP000304">
    <property type="protein sequence ID" value="ABP80939.1"/>
    <property type="molecule type" value="Genomic_DNA"/>
</dbReference>
<dbReference type="RefSeq" id="WP_011914370.1">
    <property type="nucleotide sequence ID" value="NC_009434.1"/>
</dbReference>
<dbReference type="SMR" id="A4VPN8"/>
<dbReference type="GeneID" id="66822705"/>
<dbReference type="KEGG" id="psa:PST_3308"/>
<dbReference type="eggNOG" id="COG0130">
    <property type="taxonomic scope" value="Bacteria"/>
</dbReference>
<dbReference type="HOGENOM" id="CLU_032087_0_3_6"/>
<dbReference type="Proteomes" id="UP000000233">
    <property type="component" value="Chromosome"/>
</dbReference>
<dbReference type="GO" id="GO:0003723">
    <property type="term" value="F:RNA binding"/>
    <property type="evidence" value="ECO:0007669"/>
    <property type="project" value="InterPro"/>
</dbReference>
<dbReference type="GO" id="GO:0160148">
    <property type="term" value="F:tRNA pseudouridine(55) synthase activity"/>
    <property type="evidence" value="ECO:0007669"/>
    <property type="project" value="UniProtKB-EC"/>
</dbReference>
<dbReference type="GO" id="GO:1990481">
    <property type="term" value="P:mRNA pseudouridine synthesis"/>
    <property type="evidence" value="ECO:0007669"/>
    <property type="project" value="TreeGrafter"/>
</dbReference>
<dbReference type="GO" id="GO:0031119">
    <property type="term" value="P:tRNA pseudouridine synthesis"/>
    <property type="evidence" value="ECO:0007669"/>
    <property type="project" value="UniProtKB-UniRule"/>
</dbReference>
<dbReference type="CDD" id="cd02573">
    <property type="entry name" value="PseudoU_synth_EcTruB"/>
    <property type="match status" value="1"/>
</dbReference>
<dbReference type="CDD" id="cd21152">
    <property type="entry name" value="PUA_TruB_bacterial"/>
    <property type="match status" value="1"/>
</dbReference>
<dbReference type="FunFam" id="2.30.130.10:FF:000012">
    <property type="entry name" value="tRNA pseudouridine synthase B"/>
    <property type="match status" value="1"/>
</dbReference>
<dbReference type="FunFam" id="3.30.2350.10:FF:000011">
    <property type="entry name" value="tRNA pseudouridine synthase B"/>
    <property type="match status" value="1"/>
</dbReference>
<dbReference type="Gene3D" id="3.30.2350.10">
    <property type="entry name" value="Pseudouridine synthase"/>
    <property type="match status" value="1"/>
</dbReference>
<dbReference type="Gene3D" id="2.30.130.10">
    <property type="entry name" value="PUA domain"/>
    <property type="match status" value="1"/>
</dbReference>
<dbReference type="HAMAP" id="MF_01080">
    <property type="entry name" value="TruB_bact"/>
    <property type="match status" value="1"/>
</dbReference>
<dbReference type="InterPro" id="IPR020103">
    <property type="entry name" value="PsdUridine_synth_cat_dom_sf"/>
</dbReference>
<dbReference type="InterPro" id="IPR002501">
    <property type="entry name" value="PsdUridine_synth_N"/>
</dbReference>
<dbReference type="InterPro" id="IPR015947">
    <property type="entry name" value="PUA-like_sf"/>
</dbReference>
<dbReference type="InterPro" id="IPR036974">
    <property type="entry name" value="PUA_sf"/>
</dbReference>
<dbReference type="InterPro" id="IPR014780">
    <property type="entry name" value="tRNA_psdUridine_synth_TruB"/>
</dbReference>
<dbReference type="InterPro" id="IPR015240">
    <property type="entry name" value="tRNA_sdUridine_synth_fam1_C"/>
</dbReference>
<dbReference type="InterPro" id="IPR032819">
    <property type="entry name" value="TruB_C"/>
</dbReference>
<dbReference type="NCBIfam" id="TIGR00431">
    <property type="entry name" value="TruB"/>
    <property type="match status" value="1"/>
</dbReference>
<dbReference type="PANTHER" id="PTHR13767:SF2">
    <property type="entry name" value="PSEUDOURIDYLATE SYNTHASE TRUB1"/>
    <property type="match status" value="1"/>
</dbReference>
<dbReference type="PANTHER" id="PTHR13767">
    <property type="entry name" value="TRNA-PSEUDOURIDINE SYNTHASE"/>
    <property type="match status" value="1"/>
</dbReference>
<dbReference type="Pfam" id="PF09157">
    <property type="entry name" value="TruB-C_2"/>
    <property type="match status" value="1"/>
</dbReference>
<dbReference type="Pfam" id="PF16198">
    <property type="entry name" value="TruB_C_2"/>
    <property type="match status" value="1"/>
</dbReference>
<dbReference type="Pfam" id="PF01509">
    <property type="entry name" value="TruB_N"/>
    <property type="match status" value="1"/>
</dbReference>
<dbReference type="SUPFAM" id="SSF55120">
    <property type="entry name" value="Pseudouridine synthase"/>
    <property type="match status" value="1"/>
</dbReference>
<dbReference type="SUPFAM" id="SSF88697">
    <property type="entry name" value="PUA domain-like"/>
    <property type="match status" value="1"/>
</dbReference>
<name>TRUB_STUS1</name>
<feature type="chain" id="PRO_1000084650" description="tRNA pseudouridine synthase B">
    <location>
        <begin position="1"/>
        <end position="305"/>
    </location>
</feature>
<feature type="active site" description="Nucleophile" evidence="1">
    <location>
        <position position="48"/>
    </location>
</feature>
<keyword id="KW-0413">Isomerase</keyword>
<keyword id="KW-1185">Reference proteome</keyword>
<keyword id="KW-0819">tRNA processing</keyword>